<feature type="chain" id="PRO_1000166633" description="NADH-quinone oxidoreductase subunit I">
    <location>
        <begin position="1"/>
        <end position="163"/>
    </location>
</feature>
<feature type="domain" description="4Fe-4S ferredoxin-type 1" evidence="1">
    <location>
        <begin position="53"/>
        <end position="83"/>
    </location>
</feature>
<feature type="domain" description="4Fe-4S ferredoxin-type 2" evidence="1">
    <location>
        <begin position="94"/>
        <end position="123"/>
    </location>
</feature>
<feature type="binding site" evidence="1">
    <location>
        <position position="63"/>
    </location>
    <ligand>
        <name>[4Fe-4S] cluster</name>
        <dbReference type="ChEBI" id="CHEBI:49883"/>
        <label>1</label>
    </ligand>
</feature>
<feature type="binding site" evidence="1">
    <location>
        <position position="66"/>
    </location>
    <ligand>
        <name>[4Fe-4S] cluster</name>
        <dbReference type="ChEBI" id="CHEBI:49883"/>
        <label>1</label>
    </ligand>
</feature>
<feature type="binding site" evidence="1">
    <location>
        <position position="69"/>
    </location>
    <ligand>
        <name>[4Fe-4S] cluster</name>
        <dbReference type="ChEBI" id="CHEBI:49883"/>
        <label>1</label>
    </ligand>
</feature>
<feature type="binding site" evidence="1">
    <location>
        <position position="73"/>
    </location>
    <ligand>
        <name>[4Fe-4S] cluster</name>
        <dbReference type="ChEBI" id="CHEBI:49883"/>
        <label>2</label>
    </ligand>
</feature>
<feature type="binding site" evidence="1">
    <location>
        <position position="103"/>
    </location>
    <ligand>
        <name>[4Fe-4S] cluster</name>
        <dbReference type="ChEBI" id="CHEBI:49883"/>
        <label>2</label>
    </ligand>
</feature>
<feature type="binding site" evidence="1">
    <location>
        <position position="106"/>
    </location>
    <ligand>
        <name>[4Fe-4S] cluster</name>
        <dbReference type="ChEBI" id="CHEBI:49883"/>
        <label>2</label>
    </ligand>
</feature>
<feature type="binding site" evidence="1">
    <location>
        <position position="109"/>
    </location>
    <ligand>
        <name>[4Fe-4S] cluster</name>
        <dbReference type="ChEBI" id="CHEBI:49883"/>
        <label>2</label>
    </ligand>
</feature>
<feature type="binding site" evidence="1">
    <location>
        <position position="113"/>
    </location>
    <ligand>
        <name>[4Fe-4S] cluster</name>
        <dbReference type="ChEBI" id="CHEBI:49883"/>
        <label>1</label>
    </ligand>
</feature>
<name>NUOI_ALLAM</name>
<sequence length="163" mass="18801">MASVSQAVRSLFLKEFVNAFFLSMRYFFKQKATVNYPFEKGPVSPRFRGEHALRRYPNGEERCIACKLCEAICPAQAITIEAGPRRNDGTRRTVRYDIDMVKCIYCGFCQEACPVDAIVEGPNFEFSTESREELYFDKAKLLANGDRWEREIARNLAQDAPYR</sequence>
<proteinExistence type="inferred from homology"/>
<evidence type="ECO:0000255" key="1">
    <source>
        <dbReference type="HAMAP-Rule" id="MF_01351"/>
    </source>
</evidence>
<accession>B9JVF4</accession>
<organism>
    <name type="scientific">Allorhizobium ampelinum (strain ATCC BAA-846 / DSM 112012 / S4)</name>
    <name type="common">Agrobacterium vitis (strain S4)</name>
    <dbReference type="NCBI Taxonomy" id="311402"/>
    <lineage>
        <taxon>Bacteria</taxon>
        <taxon>Pseudomonadati</taxon>
        <taxon>Pseudomonadota</taxon>
        <taxon>Alphaproteobacteria</taxon>
        <taxon>Hyphomicrobiales</taxon>
        <taxon>Rhizobiaceae</taxon>
        <taxon>Rhizobium/Agrobacterium group</taxon>
        <taxon>Allorhizobium</taxon>
        <taxon>Allorhizobium ampelinum</taxon>
    </lineage>
</organism>
<protein>
    <recommendedName>
        <fullName evidence="1">NADH-quinone oxidoreductase subunit I</fullName>
        <ecNumber evidence="1">7.1.1.-</ecNumber>
    </recommendedName>
    <alternativeName>
        <fullName evidence="1">NADH dehydrogenase I subunit I</fullName>
    </alternativeName>
    <alternativeName>
        <fullName evidence="1">NDH-1 subunit I</fullName>
    </alternativeName>
</protein>
<gene>
    <name evidence="1" type="primary">nuoI</name>
    <name type="ordered locus">Avi_1723</name>
</gene>
<reference key="1">
    <citation type="journal article" date="2009" name="J. Bacteriol.">
        <title>Genome sequences of three Agrobacterium biovars help elucidate the evolution of multichromosome genomes in bacteria.</title>
        <authorList>
            <person name="Slater S.C."/>
            <person name="Goldman B.S."/>
            <person name="Goodner B."/>
            <person name="Setubal J.C."/>
            <person name="Farrand S.K."/>
            <person name="Nester E.W."/>
            <person name="Burr T.J."/>
            <person name="Banta L."/>
            <person name="Dickerman A.W."/>
            <person name="Paulsen I."/>
            <person name="Otten L."/>
            <person name="Suen G."/>
            <person name="Welch R."/>
            <person name="Almeida N.F."/>
            <person name="Arnold F."/>
            <person name="Burton O.T."/>
            <person name="Du Z."/>
            <person name="Ewing A."/>
            <person name="Godsy E."/>
            <person name="Heisel S."/>
            <person name="Houmiel K.L."/>
            <person name="Jhaveri J."/>
            <person name="Lu J."/>
            <person name="Miller N.M."/>
            <person name="Norton S."/>
            <person name="Chen Q."/>
            <person name="Phoolcharoen W."/>
            <person name="Ohlin V."/>
            <person name="Ondrusek D."/>
            <person name="Pride N."/>
            <person name="Stricklin S.L."/>
            <person name="Sun J."/>
            <person name="Wheeler C."/>
            <person name="Wilson L."/>
            <person name="Zhu H."/>
            <person name="Wood D.W."/>
        </authorList>
    </citation>
    <scope>NUCLEOTIDE SEQUENCE [LARGE SCALE GENOMIC DNA]</scope>
    <source>
        <strain>ATCC BAA-846 / DSM 112012 / S4</strain>
    </source>
</reference>
<dbReference type="EC" id="7.1.1.-" evidence="1"/>
<dbReference type="EMBL" id="CP000633">
    <property type="protein sequence ID" value="ACM36234.1"/>
    <property type="molecule type" value="Genomic_DNA"/>
</dbReference>
<dbReference type="RefSeq" id="WP_015915657.1">
    <property type="nucleotide sequence ID" value="NC_011989.1"/>
</dbReference>
<dbReference type="SMR" id="B9JVF4"/>
<dbReference type="STRING" id="311402.Avi_1723"/>
<dbReference type="GeneID" id="60682314"/>
<dbReference type="KEGG" id="avi:Avi_1723"/>
<dbReference type="eggNOG" id="COG1143">
    <property type="taxonomic scope" value="Bacteria"/>
</dbReference>
<dbReference type="HOGENOM" id="CLU_067218_5_1_5"/>
<dbReference type="Proteomes" id="UP000001596">
    <property type="component" value="Chromosome 1"/>
</dbReference>
<dbReference type="GO" id="GO:0005886">
    <property type="term" value="C:plasma membrane"/>
    <property type="evidence" value="ECO:0007669"/>
    <property type="project" value="UniProtKB-SubCell"/>
</dbReference>
<dbReference type="GO" id="GO:0051539">
    <property type="term" value="F:4 iron, 4 sulfur cluster binding"/>
    <property type="evidence" value="ECO:0007669"/>
    <property type="project" value="UniProtKB-KW"/>
</dbReference>
<dbReference type="GO" id="GO:0005506">
    <property type="term" value="F:iron ion binding"/>
    <property type="evidence" value="ECO:0007669"/>
    <property type="project" value="UniProtKB-UniRule"/>
</dbReference>
<dbReference type="GO" id="GO:0050136">
    <property type="term" value="F:NADH:ubiquinone reductase (non-electrogenic) activity"/>
    <property type="evidence" value="ECO:0007669"/>
    <property type="project" value="UniProtKB-UniRule"/>
</dbReference>
<dbReference type="GO" id="GO:0048038">
    <property type="term" value="F:quinone binding"/>
    <property type="evidence" value="ECO:0007669"/>
    <property type="project" value="UniProtKB-KW"/>
</dbReference>
<dbReference type="GO" id="GO:0009060">
    <property type="term" value="P:aerobic respiration"/>
    <property type="evidence" value="ECO:0007669"/>
    <property type="project" value="TreeGrafter"/>
</dbReference>
<dbReference type="FunFam" id="3.30.70.3270:FF:000001">
    <property type="entry name" value="NADH-quinone oxidoreductase subunit I 1"/>
    <property type="match status" value="1"/>
</dbReference>
<dbReference type="Gene3D" id="3.30.70.3270">
    <property type="match status" value="1"/>
</dbReference>
<dbReference type="HAMAP" id="MF_01351">
    <property type="entry name" value="NDH1_NuoI"/>
    <property type="match status" value="1"/>
</dbReference>
<dbReference type="InterPro" id="IPR017896">
    <property type="entry name" value="4Fe4S_Fe-S-bd"/>
</dbReference>
<dbReference type="InterPro" id="IPR017900">
    <property type="entry name" value="4Fe4S_Fe_S_CS"/>
</dbReference>
<dbReference type="InterPro" id="IPR010226">
    <property type="entry name" value="NADH_quinone_OxRdtase_chainI"/>
</dbReference>
<dbReference type="NCBIfam" id="TIGR01971">
    <property type="entry name" value="NuoI"/>
    <property type="match status" value="1"/>
</dbReference>
<dbReference type="NCBIfam" id="NF004538">
    <property type="entry name" value="PRK05888.1-4"/>
    <property type="match status" value="1"/>
</dbReference>
<dbReference type="NCBIfam" id="NF004539">
    <property type="entry name" value="PRK05888.1-5"/>
    <property type="match status" value="1"/>
</dbReference>
<dbReference type="PANTHER" id="PTHR10849:SF20">
    <property type="entry name" value="NADH DEHYDROGENASE [UBIQUINONE] IRON-SULFUR PROTEIN 8, MITOCHONDRIAL"/>
    <property type="match status" value="1"/>
</dbReference>
<dbReference type="PANTHER" id="PTHR10849">
    <property type="entry name" value="NADH DEHYDROGENASE UBIQUINONE IRON-SULFUR PROTEIN 8, MITOCHONDRIAL"/>
    <property type="match status" value="1"/>
</dbReference>
<dbReference type="Pfam" id="PF12838">
    <property type="entry name" value="Fer4_7"/>
    <property type="match status" value="1"/>
</dbReference>
<dbReference type="SUPFAM" id="SSF54862">
    <property type="entry name" value="4Fe-4S ferredoxins"/>
    <property type="match status" value="1"/>
</dbReference>
<dbReference type="PROSITE" id="PS00198">
    <property type="entry name" value="4FE4S_FER_1"/>
    <property type="match status" value="2"/>
</dbReference>
<dbReference type="PROSITE" id="PS51379">
    <property type="entry name" value="4FE4S_FER_2"/>
    <property type="match status" value="2"/>
</dbReference>
<comment type="function">
    <text evidence="1">NDH-1 shuttles electrons from NADH, via FMN and iron-sulfur (Fe-S) centers, to quinones in the respiratory chain. The immediate electron acceptor for the enzyme in this species is believed to be ubiquinone. Couples the redox reaction to proton translocation (for every two electrons transferred, four hydrogen ions are translocated across the cytoplasmic membrane), and thus conserves the redox energy in a proton gradient.</text>
</comment>
<comment type="catalytic activity">
    <reaction evidence="1">
        <text>a quinone + NADH + 5 H(+)(in) = a quinol + NAD(+) + 4 H(+)(out)</text>
        <dbReference type="Rhea" id="RHEA:57888"/>
        <dbReference type="ChEBI" id="CHEBI:15378"/>
        <dbReference type="ChEBI" id="CHEBI:24646"/>
        <dbReference type="ChEBI" id="CHEBI:57540"/>
        <dbReference type="ChEBI" id="CHEBI:57945"/>
        <dbReference type="ChEBI" id="CHEBI:132124"/>
    </reaction>
</comment>
<comment type="cofactor">
    <cofactor evidence="1">
        <name>[4Fe-4S] cluster</name>
        <dbReference type="ChEBI" id="CHEBI:49883"/>
    </cofactor>
    <text evidence="1">Binds 2 [4Fe-4S] clusters per subunit.</text>
</comment>
<comment type="subunit">
    <text evidence="1">NDH-1 is composed of 14 different subunits. Subunits NuoA, H, J, K, L, M, N constitute the membrane sector of the complex.</text>
</comment>
<comment type="subcellular location">
    <subcellularLocation>
        <location evidence="1">Cell inner membrane</location>
        <topology evidence="1">Peripheral membrane protein</topology>
    </subcellularLocation>
</comment>
<comment type="similarity">
    <text evidence="1">Belongs to the complex I 23 kDa subunit family.</text>
</comment>
<keyword id="KW-0004">4Fe-4S</keyword>
<keyword id="KW-0997">Cell inner membrane</keyword>
<keyword id="KW-1003">Cell membrane</keyword>
<keyword id="KW-0408">Iron</keyword>
<keyword id="KW-0411">Iron-sulfur</keyword>
<keyword id="KW-0472">Membrane</keyword>
<keyword id="KW-0479">Metal-binding</keyword>
<keyword id="KW-0520">NAD</keyword>
<keyword id="KW-0874">Quinone</keyword>
<keyword id="KW-1185">Reference proteome</keyword>
<keyword id="KW-0677">Repeat</keyword>
<keyword id="KW-1278">Translocase</keyword>
<keyword id="KW-0830">Ubiquinone</keyword>